<comment type="function">
    <text evidence="1">This is one of the proteins that bind and probably mediate the attachment of the 5S RNA into the large ribosomal subunit, where it forms part of the central protuberance. In the 70S ribosome it contacts protein S13 of the 30S subunit (bridge B1b), connecting the 2 subunits; this bridge is implicated in subunit movement. Contacts the P site tRNA; the 5S rRNA and some of its associated proteins might help stabilize positioning of ribosome-bound tRNAs.</text>
</comment>
<comment type="subunit">
    <text evidence="1">Part of the 50S ribosomal subunit; part of the 5S rRNA/L5/L18/L25 subcomplex. Contacts the 5S rRNA and the P site tRNA. Forms a bridge to the 30S subunit in the 70S ribosome.</text>
</comment>
<comment type="similarity">
    <text evidence="1">Belongs to the universal ribosomal protein uL5 family.</text>
</comment>
<organism>
    <name type="scientific">Chlamydia trachomatis serovar L2 (strain ATCC VR-902B / DSM 19102 / 434/Bu)</name>
    <dbReference type="NCBI Taxonomy" id="471472"/>
    <lineage>
        <taxon>Bacteria</taxon>
        <taxon>Pseudomonadati</taxon>
        <taxon>Chlamydiota</taxon>
        <taxon>Chlamydiia</taxon>
        <taxon>Chlamydiales</taxon>
        <taxon>Chlamydiaceae</taxon>
        <taxon>Chlamydia/Chlamydophila group</taxon>
        <taxon>Chlamydia</taxon>
    </lineage>
</organism>
<dbReference type="EMBL" id="AM884176">
    <property type="protein sequence ID" value="CAP04216.1"/>
    <property type="molecule type" value="Genomic_DNA"/>
</dbReference>
<dbReference type="EMBL" id="M80325">
    <property type="protein sequence ID" value="AAA23174.1"/>
    <property type="molecule type" value="Genomic_DNA"/>
</dbReference>
<dbReference type="PIR" id="B71506">
    <property type="entry name" value="B71506"/>
</dbReference>
<dbReference type="RefSeq" id="WP_009873870.1">
    <property type="nucleotide sequence ID" value="NC_010287.1"/>
</dbReference>
<dbReference type="RefSeq" id="YP_001654849.1">
    <property type="nucleotide sequence ID" value="NC_010287.1"/>
</dbReference>
<dbReference type="SMR" id="B0B890"/>
<dbReference type="KEGG" id="ctb:CTL0778"/>
<dbReference type="PATRIC" id="fig|471472.4.peg.834"/>
<dbReference type="HOGENOM" id="CLU_061015_2_1_0"/>
<dbReference type="Proteomes" id="UP001154402">
    <property type="component" value="Chromosome"/>
</dbReference>
<dbReference type="GO" id="GO:1990904">
    <property type="term" value="C:ribonucleoprotein complex"/>
    <property type="evidence" value="ECO:0007669"/>
    <property type="project" value="UniProtKB-KW"/>
</dbReference>
<dbReference type="GO" id="GO:0005840">
    <property type="term" value="C:ribosome"/>
    <property type="evidence" value="ECO:0007669"/>
    <property type="project" value="UniProtKB-KW"/>
</dbReference>
<dbReference type="GO" id="GO:0019843">
    <property type="term" value="F:rRNA binding"/>
    <property type="evidence" value="ECO:0007669"/>
    <property type="project" value="UniProtKB-UniRule"/>
</dbReference>
<dbReference type="GO" id="GO:0003735">
    <property type="term" value="F:structural constituent of ribosome"/>
    <property type="evidence" value="ECO:0007669"/>
    <property type="project" value="InterPro"/>
</dbReference>
<dbReference type="GO" id="GO:0000049">
    <property type="term" value="F:tRNA binding"/>
    <property type="evidence" value="ECO:0007669"/>
    <property type="project" value="UniProtKB-UniRule"/>
</dbReference>
<dbReference type="GO" id="GO:0006412">
    <property type="term" value="P:translation"/>
    <property type="evidence" value="ECO:0007669"/>
    <property type="project" value="UniProtKB-UniRule"/>
</dbReference>
<dbReference type="FunFam" id="3.30.1440.10:FF:000001">
    <property type="entry name" value="50S ribosomal protein L5"/>
    <property type="match status" value="1"/>
</dbReference>
<dbReference type="Gene3D" id="3.30.1440.10">
    <property type="match status" value="1"/>
</dbReference>
<dbReference type="HAMAP" id="MF_01333_B">
    <property type="entry name" value="Ribosomal_uL5_B"/>
    <property type="match status" value="1"/>
</dbReference>
<dbReference type="InterPro" id="IPR002132">
    <property type="entry name" value="Ribosomal_uL5"/>
</dbReference>
<dbReference type="InterPro" id="IPR020930">
    <property type="entry name" value="Ribosomal_uL5_bac-type"/>
</dbReference>
<dbReference type="InterPro" id="IPR031309">
    <property type="entry name" value="Ribosomal_uL5_C"/>
</dbReference>
<dbReference type="InterPro" id="IPR020929">
    <property type="entry name" value="Ribosomal_uL5_CS"/>
</dbReference>
<dbReference type="InterPro" id="IPR022803">
    <property type="entry name" value="Ribosomal_uL5_dom_sf"/>
</dbReference>
<dbReference type="InterPro" id="IPR031310">
    <property type="entry name" value="Ribosomal_uL5_N"/>
</dbReference>
<dbReference type="NCBIfam" id="NF000585">
    <property type="entry name" value="PRK00010.1"/>
    <property type="match status" value="1"/>
</dbReference>
<dbReference type="PANTHER" id="PTHR11994">
    <property type="entry name" value="60S RIBOSOMAL PROTEIN L11-RELATED"/>
    <property type="match status" value="1"/>
</dbReference>
<dbReference type="Pfam" id="PF00281">
    <property type="entry name" value="Ribosomal_L5"/>
    <property type="match status" value="1"/>
</dbReference>
<dbReference type="Pfam" id="PF00673">
    <property type="entry name" value="Ribosomal_L5_C"/>
    <property type="match status" value="1"/>
</dbReference>
<dbReference type="PIRSF" id="PIRSF002161">
    <property type="entry name" value="Ribosomal_L5"/>
    <property type="match status" value="1"/>
</dbReference>
<dbReference type="SUPFAM" id="SSF55282">
    <property type="entry name" value="RL5-like"/>
    <property type="match status" value="1"/>
</dbReference>
<dbReference type="PROSITE" id="PS00358">
    <property type="entry name" value="RIBOSOMAL_L5"/>
    <property type="match status" value="1"/>
</dbReference>
<accession>B0B890</accession>
<accession>O84522</accession>
<accession>P28531</accession>
<protein>
    <recommendedName>
        <fullName evidence="1">Large ribosomal subunit protein uL5</fullName>
    </recommendedName>
    <alternativeName>
        <fullName evidence="2">50S ribosomal protein L5</fullName>
    </alternativeName>
</protein>
<name>RL5_CHLT2</name>
<sequence length="180" mass="20489">MSRLKKLYTEEIRKTLQDKFQYENVMQIPVLKKIVISMGLAEAAKDKNLFQAHLEELAVISGQKPLVTRAKNSIAGFKLREGQGIGAKVTLRGIRMYDFMDRFCNIVSPRIRDFRGFSCKGDGRGCYSLGLDDQQIFPEVDLDRVKRSQGMNITWVTTAQTDAECLTLLECMGLRFKKAQ</sequence>
<gene>
    <name evidence="1" type="primary">rplE</name>
    <name type="ordered locus">CTL0778</name>
</gene>
<keyword id="KW-0687">Ribonucleoprotein</keyword>
<keyword id="KW-0689">Ribosomal protein</keyword>
<keyword id="KW-0694">RNA-binding</keyword>
<keyword id="KW-0699">rRNA-binding</keyword>
<keyword id="KW-0820">tRNA-binding</keyword>
<reference key="1">
    <citation type="journal article" date="2008" name="Genome Res.">
        <title>Chlamydia trachomatis: genome sequence analysis of lymphogranuloma venereum isolates.</title>
        <authorList>
            <person name="Thomson N.R."/>
            <person name="Holden M.T.G."/>
            <person name="Carder C."/>
            <person name="Lennard N."/>
            <person name="Lockey S.J."/>
            <person name="Marsh P."/>
            <person name="Skipp P."/>
            <person name="O'Connor C.D."/>
            <person name="Goodhead I."/>
            <person name="Norbertzcak H."/>
            <person name="Harris B."/>
            <person name="Ormond D."/>
            <person name="Rance R."/>
            <person name="Quail M.A."/>
            <person name="Parkhill J."/>
            <person name="Stephens R.S."/>
            <person name="Clarke I.N."/>
        </authorList>
    </citation>
    <scope>NUCLEOTIDE SEQUENCE [LARGE SCALE GENOMIC DNA]</scope>
    <source>
        <strain>ATCC VR-902B / DSM 19102 / 434/Bu</strain>
    </source>
</reference>
<reference key="2">
    <citation type="journal article" date="1992" name="J. Bacteriol.">
        <title>Cloning and sequence analysis of the Chlamydia trachomatis spc ribosomal protein gene cluster.</title>
        <authorList>
            <person name="Kaul R."/>
            <person name="Gray G.J."/>
            <person name="Koehncke N.R."/>
            <person name="Gu L.J."/>
        </authorList>
    </citation>
    <scope>NUCLEOTIDE SEQUENCE [GENOMIC DNA] OF 26-180</scope>
</reference>
<proteinExistence type="inferred from homology"/>
<feature type="chain" id="PRO_1000142373" description="Large ribosomal subunit protein uL5">
    <location>
        <begin position="1"/>
        <end position="180"/>
    </location>
</feature>
<feature type="sequence conflict" description="In Ref. 2; AAA23174." evidence="2" ref="2">
    <original>R</original>
    <variation>A</variation>
    <location>
        <position position="144"/>
    </location>
</feature>
<evidence type="ECO:0000255" key="1">
    <source>
        <dbReference type="HAMAP-Rule" id="MF_01333"/>
    </source>
</evidence>
<evidence type="ECO:0000305" key="2"/>